<gene>
    <name evidence="1" type="primary">rplB</name>
    <name type="ordered locus">Pnec_0053</name>
</gene>
<evidence type="ECO:0000255" key="1">
    <source>
        <dbReference type="HAMAP-Rule" id="MF_01320"/>
    </source>
</evidence>
<evidence type="ECO:0000256" key="2">
    <source>
        <dbReference type="SAM" id="MobiDB-lite"/>
    </source>
</evidence>
<evidence type="ECO:0000305" key="3"/>
<organism>
    <name type="scientific">Polynucleobacter necessarius subsp. necessarius (strain STIR1)</name>
    <dbReference type="NCBI Taxonomy" id="452638"/>
    <lineage>
        <taxon>Bacteria</taxon>
        <taxon>Pseudomonadati</taxon>
        <taxon>Pseudomonadota</taxon>
        <taxon>Betaproteobacteria</taxon>
        <taxon>Burkholderiales</taxon>
        <taxon>Burkholderiaceae</taxon>
        <taxon>Polynucleobacter</taxon>
    </lineage>
</organism>
<keyword id="KW-0687">Ribonucleoprotein</keyword>
<keyword id="KW-0689">Ribosomal protein</keyword>
<keyword id="KW-0694">RNA-binding</keyword>
<keyword id="KW-0699">rRNA-binding</keyword>
<sequence>MPLMKTKPTSPGRRSMVKVVNPDLHKGKPFASLLEPQFQKAGRNNNGHITTRHKGGGHKHHYRVVDFKRNDKDGIPAKVERLEYDPNRSANIALILFADGECRYIPAAKGMTVGQAIMNGSEAPIKSGNNLPIRNIPVGSTIHCVEIMPGKGAQVARSAGGSAVLLAREGVYAQVRLRSGEVRRVLIDCRATIGEVGNEEHSLRQIGKAGANRWRGIRPTVRGVAMNPVDHPHGGGEGRTGEGRVPVSPWGTPTKGYRTRRNKRTTSMIVQRRQKR</sequence>
<dbReference type="EMBL" id="CP001010">
    <property type="protein sequence ID" value="ACB43381.1"/>
    <property type="molecule type" value="Genomic_DNA"/>
</dbReference>
<dbReference type="SMR" id="B1XSQ4"/>
<dbReference type="STRING" id="452638.Pnec_0053"/>
<dbReference type="KEGG" id="pne:Pnec_0053"/>
<dbReference type="eggNOG" id="COG0090">
    <property type="taxonomic scope" value="Bacteria"/>
</dbReference>
<dbReference type="HOGENOM" id="CLU_036235_2_1_4"/>
<dbReference type="OrthoDB" id="9778722at2"/>
<dbReference type="GO" id="GO:0015934">
    <property type="term" value="C:large ribosomal subunit"/>
    <property type="evidence" value="ECO:0007669"/>
    <property type="project" value="InterPro"/>
</dbReference>
<dbReference type="GO" id="GO:0019843">
    <property type="term" value="F:rRNA binding"/>
    <property type="evidence" value="ECO:0007669"/>
    <property type="project" value="UniProtKB-UniRule"/>
</dbReference>
<dbReference type="GO" id="GO:0003735">
    <property type="term" value="F:structural constituent of ribosome"/>
    <property type="evidence" value="ECO:0007669"/>
    <property type="project" value="InterPro"/>
</dbReference>
<dbReference type="GO" id="GO:0016740">
    <property type="term" value="F:transferase activity"/>
    <property type="evidence" value="ECO:0007669"/>
    <property type="project" value="InterPro"/>
</dbReference>
<dbReference type="GO" id="GO:0002181">
    <property type="term" value="P:cytoplasmic translation"/>
    <property type="evidence" value="ECO:0007669"/>
    <property type="project" value="TreeGrafter"/>
</dbReference>
<dbReference type="FunFam" id="2.30.30.30:FF:000001">
    <property type="entry name" value="50S ribosomal protein L2"/>
    <property type="match status" value="1"/>
</dbReference>
<dbReference type="FunFam" id="2.40.50.140:FF:000003">
    <property type="entry name" value="50S ribosomal protein L2"/>
    <property type="match status" value="1"/>
</dbReference>
<dbReference type="FunFam" id="4.10.950.10:FF:000001">
    <property type="entry name" value="50S ribosomal protein L2"/>
    <property type="match status" value="1"/>
</dbReference>
<dbReference type="Gene3D" id="2.30.30.30">
    <property type="match status" value="1"/>
</dbReference>
<dbReference type="Gene3D" id="2.40.50.140">
    <property type="entry name" value="Nucleic acid-binding proteins"/>
    <property type="match status" value="1"/>
</dbReference>
<dbReference type="Gene3D" id="4.10.950.10">
    <property type="entry name" value="Ribosomal protein L2, domain 3"/>
    <property type="match status" value="1"/>
</dbReference>
<dbReference type="HAMAP" id="MF_01320_B">
    <property type="entry name" value="Ribosomal_uL2_B"/>
    <property type="match status" value="1"/>
</dbReference>
<dbReference type="InterPro" id="IPR012340">
    <property type="entry name" value="NA-bd_OB-fold"/>
</dbReference>
<dbReference type="InterPro" id="IPR014722">
    <property type="entry name" value="Rib_uL2_dom2"/>
</dbReference>
<dbReference type="InterPro" id="IPR002171">
    <property type="entry name" value="Ribosomal_uL2"/>
</dbReference>
<dbReference type="InterPro" id="IPR005880">
    <property type="entry name" value="Ribosomal_uL2_bac/org-type"/>
</dbReference>
<dbReference type="InterPro" id="IPR022669">
    <property type="entry name" value="Ribosomal_uL2_C"/>
</dbReference>
<dbReference type="InterPro" id="IPR022671">
    <property type="entry name" value="Ribosomal_uL2_CS"/>
</dbReference>
<dbReference type="InterPro" id="IPR014726">
    <property type="entry name" value="Ribosomal_uL2_dom3"/>
</dbReference>
<dbReference type="InterPro" id="IPR022666">
    <property type="entry name" value="Ribosomal_uL2_RNA-bd_dom"/>
</dbReference>
<dbReference type="InterPro" id="IPR008991">
    <property type="entry name" value="Translation_prot_SH3-like_sf"/>
</dbReference>
<dbReference type="NCBIfam" id="TIGR01171">
    <property type="entry name" value="rplB_bact"/>
    <property type="match status" value="1"/>
</dbReference>
<dbReference type="PANTHER" id="PTHR13691:SF5">
    <property type="entry name" value="LARGE RIBOSOMAL SUBUNIT PROTEIN UL2M"/>
    <property type="match status" value="1"/>
</dbReference>
<dbReference type="PANTHER" id="PTHR13691">
    <property type="entry name" value="RIBOSOMAL PROTEIN L2"/>
    <property type="match status" value="1"/>
</dbReference>
<dbReference type="Pfam" id="PF00181">
    <property type="entry name" value="Ribosomal_L2"/>
    <property type="match status" value="1"/>
</dbReference>
<dbReference type="Pfam" id="PF03947">
    <property type="entry name" value="Ribosomal_L2_C"/>
    <property type="match status" value="1"/>
</dbReference>
<dbReference type="PIRSF" id="PIRSF002158">
    <property type="entry name" value="Ribosomal_L2"/>
    <property type="match status" value="1"/>
</dbReference>
<dbReference type="SMART" id="SM01383">
    <property type="entry name" value="Ribosomal_L2"/>
    <property type="match status" value="1"/>
</dbReference>
<dbReference type="SMART" id="SM01382">
    <property type="entry name" value="Ribosomal_L2_C"/>
    <property type="match status" value="1"/>
</dbReference>
<dbReference type="SUPFAM" id="SSF50249">
    <property type="entry name" value="Nucleic acid-binding proteins"/>
    <property type="match status" value="1"/>
</dbReference>
<dbReference type="SUPFAM" id="SSF50104">
    <property type="entry name" value="Translation proteins SH3-like domain"/>
    <property type="match status" value="1"/>
</dbReference>
<dbReference type="PROSITE" id="PS00467">
    <property type="entry name" value="RIBOSOMAL_L2"/>
    <property type="match status" value="1"/>
</dbReference>
<proteinExistence type="inferred from homology"/>
<protein>
    <recommendedName>
        <fullName evidence="1">Large ribosomal subunit protein uL2</fullName>
    </recommendedName>
    <alternativeName>
        <fullName evidence="3">50S ribosomal protein L2</fullName>
    </alternativeName>
</protein>
<comment type="function">
    <text evidence="1">One of the primary rRNA binding proteins. Required for association of the 30S and 50S subunits to form the 70S ribosome, for tRNA binding and peptide bond formation. It has been suggested to have peptidyltransferase activity; this is somewhat controversial. Makes several contacts with the 16S rRNA in the 70S ribosome.</text>
</comment>
<comment type="subunit">
    <text evidence="1">Part of the 50S ribosomal subunit. Forms a bridge to the 30S subunit in the 70S ribosome.</text>
</comment>
<comment type="similarity">
    <text evidence="1">Belongs to the universal ribosomal protein uL2 family.</text>
</comment>
<name>RL2_POLNS</name>
<accession>B1XSQ4</accession>
<reference key="1">
    <citation type="journal article" date="2013" name="Proc. Natl. Acad. Sci. U.S.A.">
        <title>Polynucleobacter necessarius, a model for genome reduction in both free-living and symbiotic bacteria.</title>
        <authorList>
            <person name="Boscaro V."/>
            <person name="Felletti M."/>
            <person name="Vannini C."/>
            <person name="Ackerman M.S."/>
            <person name="Chain P.S."/>
            <person name="Malfatti S."/>
            <person name="Vergez L.M."/>
            <person name="Shin M."/>
            <person name="Doak T.G."/>
            <person name="Lynch M."/>
            <person name="Petroni G."/>
        </authorList>
    </citation>
    <scope>NUCLEOTIDE SEQUENCE [LARGE SCALE GENOMIC DNA]</scope>
    <source>
        <strain>STIR1</strain>
    </source>
</reference>
<feature type="chain" id="PRO_1000141594" description="Large ribosomal subunit protein uL2">
    <location>
        <begin position="1"/>
        <end position="276"/>
    </location>
</feature>
<feature type="region of interest" description="Disordered" evidence="2">
    <location>
        <begin position="224"/>
        <end position="258"/>
    </location>
</feature>
<feature type="compositionally biased region" description="Basic and acidic residues" evidence="2">
    <location>
        <begin position="230"/>
        <end position="242"/>
    </location>
</feature>